<dbReference type="EC" id="2.3.1.109" evidence="1"/>
<dbReference type="EMBL" id="CP000946">
    <property type="protein sequence ID" value="ACA77533.1"/>
    <property type="molecule type" value="Genomic_DNA"/>
</dbReference>
<dbReference type="RefSeq" id="WP_000989419.1">
    <property type="nucleotide sequence ID" value="NZ_MTFT01000006.1"/>
</dbReference>
<dbReference type="SMR" id="B1IPI3"/>
<dbReference type="GeneID" id="75171814"/>
<dbReference type="KEGG" id="ecl:EcolC_1885"/>
<dbReference type="HOGENOM" id="CLU_057655_0_0_6"/>
<dbReference type="UniPathway" id="UPA00185">
    <property type="reaction ID" value="UER00279"/>
</dbReference>
<dbReference type="GO" id="GO:0008791">
    <property type="term" value="F:arginine N-succinyltransferase activity"/>
    <property type="evidence" value="ECO:0007669"/>
    <property type="project" value="UniProtKB-UniRule"/>
</dbReference>
<dbReference type="GO" id="GO:0019544">
    <property type="term" value="P:arginine catabolic process to glutamate"/>
    <property type="evidence" value="ECO:0007669"/>
    <property type="project" value="UniProtKB-UniRule"/>
</dbReference>
<dbReference type="GO" id="GO:0019545">
    <property type="term" value="P:arginine catabolic process to succinate"/>
    <property type="evidence" value="ECO:0007669"/>
    <property type="project" value="UniProtKB-UniRule"/>
</dbReference>
<dbReference type="Gene3D" id="2.40.40.20">
    <property type="match status" value="1"/>
</dbReference>
<dbReference type="Gene3D" id="3.40.630.30">
    <property type="match status" value="1"/>
</dbReference>
<dbReference type="HAMAP" id="MF_01171">
    <property type="entry name" value="AstA"/>
    <property type="match status" value="1"/>
</dbReference>
<dbReference type="InterPro" id="IPR016181">
    <property type="entry name" value="Acyl_CoA_acyltransferase"/>
</dbReference>
<dbReference type="InterPro" id="IPR007041">
    <property type="entry name" value="Arg_succinylTrfase_AstA/AruG"/>
</dbReference>
<dbReference type="InterPro" id="IPR017650">
    <property type="entry name" value="Arginine_N-succinylTrfase"/>
</dbReference>
<dbReference type="NCBIfam" id="TIGR03243">
    <property type="entry name" value="arg_catab_AOST"/>
    <property type="match status" value="1"/>
</dbReference>
<dbReference type="NCBIfam" id="TIGR03244">
    <property type="entry name" value="arg_catab_AstA"/>
    <property type="match status" value="1"/>
</dbReference>
<dbReference type="NCBIfam" id="NF007770">
    <property type="entry name" value="PRK10456.1"/>
    <property type="match status" value="1"/>
</dbReference>
<dbReference type="PANTHER" id="PTHR30420:SF1">
    <property type="entry name" value="ARGININE N-SUCCINYLTRANSFERASE"/>
    <property type="match status" value="1"/>
</dbReference>
<dbReference type="PANTHER" id="PTHR30420">
    <property type="entry name" value="N-SUCCINYLARGININE DIHYDROLASE"/>
    <property type="match status" value="1"/>
</dbReference>
<dbReference type="Pfam" id="PF04958">
    <property type="entry name" value="AstA"/>
    <property type="match status" value="1"/>
</dbReference>
<dbReference type="SUPFAM" id="SSF55729">
    <property type="entry name" value="Acyl-CoA N-acyltransferases (Nat)"/>
    <property type="match status" value="1"/>
</dbReference>
<keyword id="KW-0012">Acyltransferase</keyword>
<keyword id="KW-0056">Arginine metabolism</keyword>
<keyword id="KW-0808">Transferase</keyword>
<accession>B1IPI3</accession>
<feature type="chain" id="PRO_1000085390" description="Arginine N-succinyltransferase">
    <location>
        <begin position="1"/>
        <end position="344"/>
    </location>
</feature>
<feature type="active site" description="Proton donor" evidence="1">
    <location>
        <position position="229"/>
    </location>
</feature>
<feature type="binding site" evidence="1">
    <location>
        <position position="125"/>
    </location>
    <ligand>
        <name>succinyl-CoA</name>
        <dbReference type="ChEBI" id="CHEBI:57292"/>
    </ligand>
</feature>
<proteinExistence type="inferred from homology"/>
<comment type="function">
    <text evidence="1">Catalyzes the transfer of succinyl-CoA to arginine to produce N(2)-succinylarginine.</text>
</comment>
<comment type="catalytic activity">
    <reaction evidence="1">
        <text>succinyl-CoA + L-arginine = N(2)-succinyl-L-arginine + CoA + H(+)</text>
        <dbReference type="Rhea" id="RHEA:15185"/>
        <dbReference type="ChEBI" id="CHEBI:15378"/>
        <dbReference type="ChEBI" id="CHEBI:32682"/>
        <dbReference type="ChEBI" id="CHEBI:57287"/>
        <dbReference type="ChEBI" id="CHEBI:57292"/>
        <dbReference type="ChEBI" id="CHEBI:58241"/>
        <dbReference type="EC" id="2.3.1.109"/>
    </reaction>
</comment>
<comment type="pathway">
    <text evidence="1">Amino-acid degradation; L-arginine degradation via AST pathway; L-glutamate and succinate from L-arginine: step 1/5.</text>
</comment>
<comment type="similarity">
    <text evidence="1">Belongs to the arginine N-succinyltransferase family.</text>
</comment>
<organism>
    <name type="scientific">Escherichia coli (strain ATCC 8739 / DSM 1576 / NBRC 3972 / NCIMB 8545 / WDCM 00012 / Crooks)</name>
    <dbReference type="NCBI Taxonomy" id="481805"/>
    <lineage>
        <taxon>Bacteria</taxon>
        <taxon>Pseudomonadati</taxon>
        <taxon>Pseudomonadota</taxon>
        <taxon>Gammaproteobacteria</taxon>
        <taxon>Enterobacterales</taxon>
        <taxon>Enterobacteriaceae</taxon>
        <taxon>Escherichia</taxon>
    </lineage>
</organism>
<reference key="1">
    <citation type="submission" date="2008-02" db="EMBL/GenBank/DDBJ databases">
        <title>Complete sequence of Escherichia coli C str. ATCC 8739.</title>
        <authorList>
            <person name="Copeland A."/>
            <person name="Lucas S."/>
            <person name="Lapidus A."/>
            <person name="Glavina del Rio T."/>
            <person name="Dalin E."/>
            <person name="Tice H."/>
            <person name="Bruce D."/>
            <person name="Goodwin L."/>
            <person name="Pitluck S."/>
            <person name="Kiss H."/>
            <person name="Brettin T."/>
            <person name="Detter J.C."/>
            <person name="Han C."/>
            <person name="Kuske C.R."/>
            <person name="Schmutz J."/>
            <person name="Larimer F."/>
            <person name="Land M."/>
            <person name="Hauser L."/>
            <person name="Kyrpides N."/>
            <person name="Mikhailova N."/>
            <person name="Ingram L."/>
            <person name="Richardson P."/>
        </authorList>
    </citation>
    <scope>NUCLEOTIDE SEQUENCE [LARGE SCALE GENOMIC DNA]</scope>
    <source>
        <strain>ATCC 8739 / DSM 1576 / NBRC 3972 / NCIMB 8545 / WDCM 00012 / Crooks</strain>
    </source>
</reference>
<gene>
    <name evidence="1" type="primary">astA</name>
    <name type="ordered locus">EcolC_1885</name>
</gene>
<sequence length="344" mass="38456">MMVIRPVERSDVSALMQLASKTGGGLTSLPANEATLSARIERAIKTWQGELPKSEQGYVFVLEDSETGTVAGICAIEVAVGLNDPWYNYRVGTLVHASKELNVYNALPTLFLSNDHTGSSELCTLFLDPDWRKEGNGYLLSKSRFMFMAAFRDKFNDKVVAEMRGVIDEHGYSPFWQSLGKRFFSMDFSRADFLCGTGQKAFIAELMPKHPIYTHFLSQEAQDVIGQVHPQTAPARAVLEKEGFRYRNYIDIFDGGPTLECDIDRVRAIRKSRLVEVAEGQPAQGDFPACLVANENYHHFRVVLVRTDPATERLILTAAQLDALKCHAGDRVRLVRLCAEEKTA</sequence>
<name>ASTA_ECOLC</name>
<protein>
    <recommendedName>
        <fullName evidence="1">Arginine N-succinyltransferase</fullName>
        <shortName evidence="1">AST</shortName>
        <ecNumber evidence="1">2.3.1.109</ecNumber>
    </recommendedName>
    <alternativeName>
        <fullName evidence="1">AOST</fullName>
    </alternativeName>
</protein>
<evidence type="ECO:0000255" key="1">
    <source>
        <dbReference type="HAMAP-Rule" id="MF_01171"/>
    </source>
</evidence>